<gene>
    <name evidence="1" type="primary">murR</name>
    <name type="ordered locus">Z3692</name>
    <name type="ordered locus">ECs3298</name>
</gene>
<proteinExistence type="inferred from homology"/>
<reference key="1">
    <citation type="journal article" date="2001" name="Nature">
        <title>Genome sequence of enterohaemorrhagic Escherichia coli O157:H7.</title>
        <authorList>
            <person name="Perna N.T."/>
            <person name="Plunkett G. III"/>
            <person name="Burland V."/>
            <person name="Mau B."/>
            <person name="Glasner J.D."/>
            <person name="Rose D.J."/>
            <person name="Mayhew G.F."/>
            <person name="Evans P.S."/>
            <person name="Gregor J."/>
            <person name="Kirkpatrick H.A."/>
            <person name="Posfai G."/>
            <person name="Hackett J."/>
            <person name="Klink S."/>
            <person name="Boutin A."/>
            <person name="Shao Y."/>
            <person name="Miller L."/>
            <person name="Grotbeck E.J."/>
            <person name="Davis N.W."/>
            <person name="Lim A."/>
            <person name="Dimalanta E.T."/>
            <person name="Potamousis K."/>
            <person name="Apodaca J."/>
            <person name="Anantharaman T.S."/>
            <person name="Lin J."/>
            <person name="Yen G."/>
            <person name="Schwartz D.C."/>
            <person name="Welch R.A."/>
            <person name="Blattner F.R."/>
        </authorList>
    </citation>
    <scope>NUCLEOTIDE SEQUENCE [LARGE SCALE GENOMIC DNA]</scope>
    <source>
        <strain>O157:H7 / EDL933 / ATCC 700927 / EHEC</strain>
    </source>
</reference>
<reference key="2">
    <citation type="journal article" date="2001" name="DNA Res.">
        <title>Complete genome sequence of enterohemorrhagic Escherichia coli O157:H7 and genomic comparison with a laboratory strain K-12.</title>
        <authorList>
            <person name="Hayashi T."/>
            <person name="Makino K."/>
            <person name="Ohnishi M."/>
            <person name="Kurokawa K."/>
            <person name="Ishii K."/>
            <person name="Yokoyama K."/>
            <person name="Han C.-G."/>
            <person name="Ohtsubo E."/>
            <person name="Nakayama K."/>
            <person name="Murata T."/>
            <person name="Tanaka M."/>
            <person name="Tobe T."/>
            <person name="Iida T."/>
            <person name="Takami H."/>
            <person name="Honda T."/>
            <person name="Sasakawa C."/>
            <person name="Ogasawara N."/>
            <person name="Yasunaga T."/>
            <person name="Kuhara S."/>
            <person name="Shiba T."/>
            <person name="Hattori M."/>
            <person name="Shinagawa H."/>
        </authorList>
    </citation>
    <scope>NUCLEOTIDE SEQUENCE [LARGE SCALE GENOMIC DNA]</scope>
    <source>
        <strain>O157:H7 / Sakai / RIMD 0509952 / EHEC</strain>
    </source>
</reference>
<name>MURR_ECO57</name>
<evidence type="ECO:0000255" key="1">
    <source>
        <dbReference type="HAMAP-Rule" id="MF_02108"/>
    </source>
</evidence>
<accession>Q8XBJ3</accession>
<accession>Q7ABS8</accession>
<organism>
    <name type="scientific">Escherichia coli O157:H7</name>
    <dbReference type="NCBI Taxonomy" id="83334"/>
    <lineage>
        <taxon>Bacteria</taxon>
        <taxon>Pseudomonadati</taxon>
        <taxon>Pseudomonadota</taxon>
        <taxon>Gammaproteobacteria</taxon>
        <taxon>Enterobacterales</taxon>
        <taxon>Enterobacteriaceae</taxon>
        <taxon>Escherichia</taxon>
    </lineage>
</organism>
<dbReference type="EMBL" id="AE005174">
    <property type="protein sequence ID" value="AAG57545.1"/>
    <property type="molecule type" value="Genomic_DNA"/>
</dbReference>
<dbReference type="EMBL" id="BA000007">
    <property type="protein sequence ID" value="BAB36721.1"/>
    <property type="molecule type" value="Genomic_DNA"/>
</dbReference>
<dbReference type="PIR" id="B91041">
    <property type="entry name" value="B91041"/>
</dbReference>
<dbReference type="PIR" id="E85885">
    <property type="entry name" value="E85885"/>
</dbReference>
<dbReference type="RefSeq" id="NP_311325.1">
    <property type="nucleotide sequence ID" value="NC_002695.1"/>
</dbReference>
<dbReference type="RefSeq" id="WP_000966443.1">
    <property type="nucleotide sequence ID" value="NZ_VOAI01000001.1"/>
</dbReference>
<dbReference type="SMR" id="Q8XBJ3"/>
<dbReference type="STRING" id="155864.Z3692"/>
<dbReference type="GeneID" id="915484"/>
<dbReference type="KEGG" id="ece:Z3692"/>
<dbReference type="KEGG" id="ecs:ECs_3298"/>
<dbReference type="PATRIC" id="fig|386585.9.peg.3445"/>
<dbReference type="eggNOG" id="COG1737">
    <property type="taxonomic scope" value="Bacteria"/>
</dbReference>
<dbReference type="HOGENOM" id="CLU_055769_0_2_6"/>
<dbReference type="OMA" id="DSHIQMA"/>
<dbReference type="UniPathway" id="UPA00342"/>
<dbReference type="Proteomes" id="UP000000558">
    <property type="component" value="Chromosome"/>
</dbReference>
<dbReference type="Proteomes" id="UP000002519">
    <property type="component" value="Chromosome"/>
</dbReference>
<dbReference type="GO" id="GO:0097367">
    <property type="term" value="F:carbohydrate derivative binding"/>
    <property type="evidence" value="ECO:0007669"/>
    <property type="project" value="InterPro"/>
</dbReference>
<dbReference type="GO" id="GO:0003677">
    <property type="term" value="F:DNA binding"/>
    <property type="evidence" value="ECO:0007669"/>
    <property type="project" value="UniProtKB-KW"/>
</dbReference>
<dbReference type="GO" id="GO:0003700">
    <property type="term" value="F:DNA-binding transcription factor activity"/>
    <property type="evidence" value="ECO:0007669"/>
    <property type="project" value="UniProtKB-UniRule"/>
</dbReference>
<dbReference type="GO" id="GO:1901135">
    <property type="term" value="P:carbohydrate derivative metabolic process"/>
    <property type="evidence" value="ECO:0007669"/>
    <property type="project" value="InterPro"/>
</dbReference>
<dbReference type="GO" id="GO:0097173">
    <property type="term" value="P:N-acetylmuramic acid catabolic process"/>
    <property type="evidence" value="ECO:0007669"/>
    <property type="project" value="UniProtKB-UniPathway"/>
</dbReference>
<dbReference type="GO" id="GO:0045892">
    <property type="term" value="P:negative regulation of DNA-templated transcription"/>
    <property type="evidence" value="ECO:0007669"/>
    <property type="project" value="UniProtKB-UniRule"/>
</dbReference>
<dbReference type="GO" id="GO:0043470">
    <property type="term" value="P:regulation of carbohydrate catabolic process"/>
    <property type="evidence" value="ECO:0007669"/>
    <property type="project" value="UniProtKB-UniRule"/>
</dbReference>
<dbReference type="CDD" id="cd05013">
    <property type="entry name" value="SIS_RpiR"/>
    <property type="match status" value="1"/>
</dbReference>
<dbReference type="FunFam" id="3.40.50.10490:FF:000028">
    <property type="entry name" value="HTH-type transcriptional regulator MurR"/>
    <property type="match status" value="1"/>
</dbReference>
<dbReference type="Gene3D" id="3.40.50.10490">
    <property type="entry name" value="Glucose-6-phosphate isomerase like protein, domain 1"/>
    <property type="match status" value="1"/>
</dbReference>
<dbReference type="Gene3D" id="1.10.10.10">
    <property type="entry name" value="Winged helix-like DNA-binding domain superfamily/Winged helix DNA-binding domain"/>
    <property type="match status" value="1"/>
</dbReference>
<dbReference type="HAMAP" id="MF_02108">
    <property type="entry name" value="HTH_type_MurR"/>
    <property type="match status" value="1"/>
</dbReference>
<dbReference type="InterPro" id="IPR009057">
    <property type="entry name" value="Homeodomain-like_sf"/>
</dbReference>
<dbReference type="InterPro" id="IPR000281">
    <property type="entry name" value="HTH_RpiR"/>
</dbReference>
<dbReference type="InterPro" id="IPR047640">
    <property type="entry name" value="RpiR-like"/>
</dbReference>
<dbReference type="InterPro" id="IPR035472">
    <property type="entry name" value="RpiR-like_SIS"/>
</dbReference>
<dbReference type="InterPro" id="IPR001347">
    <property type="entry name" value="SIS_dom"/>
</dbReference>
<dbReference type="InterPro" id="IPR046348">
    <property type="entry name" value="SIS_dom_sf"/>
</dbReference>
<dbReference type="InterPro" id="IPR022821">
    <property type="entry name" value="Tscrpt_reg_HTH_MurR"/>
</dbReference>
<dbReference type="InterPro" id="IPR036388">
    <property type="entry name" value="WH-like_DNA-bd_sf"/>
</dbReference>
<dbReference type="NCBIfam" id="NF012026">
    <property type="entry name" value="PRK15482.1"/>
    <property type="match status" value="1"/>
</dbReference>
<dbReference type="PANTHER" id="PTHR30514">
    <property type="entry name" value="GLUCOKINASE"/>
    <property type="match status" value="1"/>
</dbReference>
<dbReference type="PANTHER" id="PTHR30514:SF17">
    <property type="entry name" value="HTH-TYPE TRANSCRIPTIONAL REGULATOR MURR"/>
    <property type="match status" value="1"/>
</dbReference>
<dbReference type="Pfam" id="PF01418">
    <property type="entry name" value="HTH_6"/>
    <property type="match status" value="1"/>
</dbReference>
<dbReference type="Pfam" id="PF01380">
    <property type="entry name" value="SIS"/>
    <property type="match status" value="1"/>
</dbReference>
<dbReference type="SUPFAM" id="SSF46689">
    <property type="entry name" value="Homeodomain-like"/>
    <property type="match status" value="1"/>
</dbReference>
<dbReference type="SUPFAM" id="SSF53697">
    <property type="entry name" value="SIS domain"/>
    <property type="match status" value="1"/>
</dbReference>
<dbReference type="PROSITE" id="PS51071">
    <property type="entry name" value="HTH_RPIR"/>
    <property type="match status" value="1"/>
</dbReference>
<dbReference type="PROSITE" id="PS51464">
    <property type="entry name" value="SIS"/>
    <property type="match status" value="1"/>
</dbReference>
<keyword id="KW-0119">Carbohydrate metabolism</keyword>
<keyword id="KW-0238">DNA-binding</keyword>
<keyword id="KW-1185">Reference proteome</keyword>
<keyword id="KW-0678">Repressor</keyword>
<keyword id="KW-0804">Transcription</keyword>
<keyword id="KW-0805">Transcription regulation</keyword>
<sequence length="285" mass="31327">MLYLTKIRNAESEFTENEQKIADFLRANVSELKSVSSRKMAKQLGISQSSIVKFAQKLGAQGFTELRMALIGEYSASREKTNATAQHLHSSITSDDSLEVIARKLNREKELALEQTCALFDYARLQKIIEVISKAPFIQITGLGGSALVGCDLSFKLMKIGYRVACEADTHVQATVSQALKKGDVQIAISYSGSKKEIVLCAEAARKQGATVIAITSLADSPLRRLAHFTLDTVSGETEWRSSSMSTRTAQNSVTDLLFVGLVQLNDVESLKMIQRSSELTQRLK</sequence>
<comment type="function">
    <text evidence="1">Represses the expression of the murPQ operon involved in the uptake and degradation of N-acetylmuramic acid (MurNAc). Binds to two adjacent inverted repeats within the operator region. MurNAc 6-phosphate, the substrate of MurQ, is the specific inducer that weakens binding of MurR to the operator.</text>
</comment>
<comment type="pathway">
    <text>Amino-sugar metabolism; N-acetylmuramate degradation [regulation].</text>
</comment>
<comment type="subunit">
    <text evidence="1">Homotetramer.</text>
</comment>
<feature type="chain" id="PRO_0000387762" description="HTH-type transcriptional regulator MurR">
    <location>
        <begin position="1"/>
        <end position="285"/>
    </location>
</feature>
<feature type="domain" description="HTH rpiR-type" evidence="1">
    <location>
        <begin position="1"/>
        <end position="77"/>
    </location>
</feature>
<feature type="domain" description="SIS" evidence="1">
    <location>
        <begin position="128"/>
        <end position="268"/>
    </location>
</feature>
<feature type="DNA-binding region" description="H-T-H motif" evidence="1">
    <location>
        <begin position="37"/>
        <end position="56"/>
    </location>
</feature>
<protein>
    <recommendedName>
        <fullName evidence="1">HTH-type transcriptional regulator MurR</fullName>
    </recommendedName>
    <alternativeName>
        <fullName evidence="1">MurPQ operon repressor</fullName>
    </alternativeName>
</protein>